<organism>
    <name type="scientific">Haemophilus influenzae (strain PittGG)</name>
    <dbReference type="NCBI Taxonomy" id="374931"/>
    <lineage>
        <taxon>Bacteria</taxon>
        <taxon>Pseudomonadati</taxon>
        <taxon>Pseudomonadota</taxon>
        <taxon>Gammaproteobacteria</taxon>
        <taxon>Pasteurellales</taxon>
        <taxon>Pasteurellaceae</taxon>
        <taxon>Haemophilus</taxon>
    </lineage>
</organism>
<keyword id="KW-0056">Arginine metabolism</keyword>
<keyword id="KW-0963">Cytoplasm</keyword>
<keyword id="KW-0808">Transferase</keyword>
<proteinExistence type="inferred from homology"/>
<accession>A5UHA3</accession>
<comment type="function">
    <text evidence="1">Reversibly catalyzes the transfer of the carbamoyl group from carbamoyl phosphate (CP) to the N(epsilon) atom of ornithine (ORN) to produce L-citrulline.</text>
</comment>
<comment type="catalytic activity">
    <reaction evidence="2">
        <text>carbamoyl phosphate + L-ornithine = L-citrulline + phosphate + H(+)</text>
        <dbReference type="Rhea" id="RHEA:19513"/>
        <dbReference type="ChEBI" id="CHEBI:15378"/>
        <dbReference type="ChEBI" id="CHEBI:43474"/>
        <dbReference type="ChEBI" id="CHEBI:46911"/>
        <dbReference type="ChEBI" id="CHEBI:57743"/>
        <dbReference type="ChEBI" id="CHEBI:58228"/>
        <dbReference type="EC" id="2.1.3.3"/>
    </reaction>
</comment>
<comment type="pathway">
    <text evidence="2">Amino-acid degradation; L-arginine degradation via ADI pathway; carbamoyl phosphate from L-arginine: step 2/2.</text>
</comment>
<comment type="subcellular location">
    <subcellularLocation>
        <location evidence="2">Cytoplasm</location>
    </subcellularLocation>
</comment>
<comment type="similarity">
    <text evidence="2">Belongs to the aspartate/ornithine carbamoyltransferase superfamily. OTCase family.</text>
</comment>
<reference key="1">
    <citation type="journal article" date="2007" name="Genome Biol.">
        <title>Characterization and modeling of the Haemophilus influenzae core and supragenomes based on the complete genomic sequences of Rd and 12 clinical nontypeable strains.</title>
        <authorList>
            <person name="Hogg J.S."/>
            <person name="Hu F.Z."/>
            <person name="Janto B."/>
            <person name="Boissy R."/>
            <person name="Hayes J."/>
            <person name="Keefe R."/>
            <person name="Post J.C."/>
            <person name="Ehrlich G.D."/>
        </authorList>
    </citation>
    <scope>NUCLEOTIDE SEQUENCE [LARGE SCALE GENOMIC DNA]</scope>
    <source>
        <strain>PittGG</strain>
    </source>
</reference>
<dbReference type="EC" id="2.1.3.3" evidence="2"/>
<dbReference type="EMBL" id="CP000672">
    <property type="protein sequence ID" value="ABR00159.1"/>
    <property type="molecule type" value="Genomic_DNA"/>
</dbReference>
<dbReference type="SMR" id="A5UHA3"/>
<dbReference type="KEGG" id="hiq:CGSHiGG_06290"/>
<dbReference type="HOGENOM" id="CLU_043846_3_1_6"/>
<dbReference type="UniPathway" id="UPA00254">
    <property type="reaction ID" value="UER00365"/>
</dbReference>
<dbReference type="Proteomes" id="UP000001990">
    <property type="component" value="Chromosome"/>
</dbReference>
<dbReference type="GO" id="GO:0005737">
    <property type="term" value="C:cytoplasm"/>
    <property type="evidence" value="ECO:0007669"/>
    <property type="project" value="UniProtKB-SubCell"/>
</dbReference>
<dbReference type="GO" id="GO:0016597">
    <property type="term" value="F:amino acid binding"/>
    <property type="evidence" value="ECO:0007669"/>
    <property type="project" value="InterPro"/>
</dbReference>
<dbReference type="GO" id="GO:0004585">
    <property type="term" value="F:ornithine carbamoyltransferase activity"/>
    <property type="evidence" value="ECO:0007669"/>
    <property type="project" value="UniProtKB-UniRule"/>
</dbReference>
<dbReference type="GO" id="GO:0042450">
    <property type="term" value="P:arginine biosynthetic process via ornithine"/>
    <property type="evidence" value="ECO:0007669"/>
    <property type="project" value="TreeGrafter"/>
</dbReference>
<dbReference type="GO" id="GO:0019547">
    <property type="term" value="P:arginine catabolic process to ornithine"/>
    <property type="evidence" value="ECO:0007669"/>
    <property type="project" value="UniProtKB-UniRule"/>
</dbReference>
<dbReference type="GO" id="GO:0019240">
    <property type="term" value="P:citrulline biosynthetic process"/>
    <property type="evidence" value="ECO:0007669"/>
    <property type="project" value="TreeGrafter"/>
</dbReference>
<dbReference type="FunFam" id="3.40.50.1370:FF:000003">
    <property type="entry name" value="Ornithine carbamoyltransferase"/>
    <property type="match status" value="1"/>
</dbReference>
<dbReference type="Gene3D" id="3.40.50.1370">
    <property type="entry name" value="Aspartate/ornithine carbamoyltransferase"/>
    <property type="match status" value="2"/>
</dbReference>
<dbReference type="HAMAP" id="MF_01109">
    <property type="entry name" value="OTCase"/>
    <property type="match status" value="1"/>
</dbReference>
<dbReference type="InterPro" id="IPR006132">
    <property type="entry name" value="Asp/Orn_carbamoyltranf_P-bd"/>
</dbReference>
<dbReference type="InterPro" id="IPR006130">
    <property type="entry name" value="Asp/Orn_carbamoylTrfase"/>
</dbReference>
<dbReference type="InterPro" id="IPR036901">
    <property type="entry name" value="Asp/Orn_carbamoylTrfase_sf"/>
</dbReference>
<dbReference type="InterPro" id="IPR006131">
    <property type="entry name" value="Asp_carbamoyltransf_Asp/Orn-bd"/>
</dbReference>
<dbReference type="InterPro" id="IPR002292">
    <property type="entry name" value="Orn/put_carbamltrans"/>
</dbReference>
<dbReference type="InterPro" id="IPR024904">
    <property type="entry name" value="OTCase_ArgI"/>
</dbReference>
<dbReference type="NCBIfam" id="TIGR00658">
    <property type="entry name" value="orni_carb_tr"/>
    <property type="match status" value="1"/>
</dbReference>
<dbReference type="NCBIfam" id="NF002470">
    <property type="entry name" value="PRK01713.1"/>
    <property type="match status" value="1"/>
</dbReference>
<dbReference type="NCBIfam" id="NF003286">
    <property type="entry name" value="PRK04284.1"/>
    <property type="match status" value="1"/>
</dbReference>
<dbReference type="PANTHER" id="PTHR45753:SF2">
    <property type="entry name" value="ORNITHINE CARBAMOYLTRANSFERASE"/>
    <property type="match status" value="1"/>
</dbReference>
<dbReference type="PANTHER" id="PTHR45753">
    <property type="entry name" value="ORNITHINE CARBAMOYLTRANSFERASE, MITOCHONDRIAL"/>
    <property type="match status" value="1"/>
</dbReference>
<dbReference type="Pfam" id="PF00185">
    <property type="entry name" value="OTCace"/>
    <property type="match status" value="1"/>
</dbReference>
<dbReference type="Pfam" id="PF02729">
    <property type="entry name" value="OTCace_N"/>
    <property type="match status" value="1"/>
</dbReference>
<dbReference type="PRINTS" id="PR00100">
    <property type="entry name" value="AOTCASE"/>
</dbReference>
<dbReference type="PRINTS" id="PR00102">
    <property type="entry name" value="OTCASE"/>
</dbReference>
<dbReference type="SUPFAM" id="SSF53671">
    <property type="entry name" value="Aspartate/ornithine carbamoyltransferase"/>
    <property type="match status" value="1"/>
</dbReference>
<dbReference type="PROSITE" id="PS00097">
    <property type="entry name" value="CARBAMOYLTRANSFERASE"/>
    <property type="match status" value="1"/>
</dbReference>
<protein>
    <recommendedName>
        <fullName evidence="2">Ornithine carbamoyltransferase</fullName>
        <shortName evidence="2">OTCase</shortName>
        <ecNumber evidence="2">2.1.3.3</ecNumber>
    </recommendedName>
</protein>
<name>OTC_HAEIG</name>
<sequence length="334" mass="37620">MAFNMKNRHLLSLVHHTEREIKYLLDLSRDLKRAKYAGTEQQKLKGKNIALIFEKTSTRTRCAFEVAAYDQGAQVTYIDPNSSQIGHKESMKDTARVLGRMYDGIEYRGFKQSIVQELADYAGVPVFNGLTDEFHPTQMLADVLTMIEHCDKPLSEISYVYIGDARNNMGNSLLLIGAKLGMDVRICAPKALLPEASLVEMCEKFAKESGARITVTEDIDKAVKGVDFVHTDVWVSMGEPLETWGERIKLLLPYQVTPELMKRTGNPKVKFMHCLPAFHNSETKVGRQIAEKYPELANGIEVTEEVFESPMNIAFEQAENRMHTIKAVMVASLA</sequence>
<feature type="chain" id="PRO_1000065094" description="Ornithine carbamoyltransferase">
    <location>
        <begin position="1"/>
        <end position="334"/>
    </location>
</feature>
<feature type="binding site" evidence="2">
    <location>
        <begin position="57"/>
        <end position="60"/>
    </location>
    <ligand>
        <name>carbamoyl phosphate</name>
        <dbReference type="ChEBI" id="CHEBI:58228"/>
    </ligand>
</feature>
<feature type="binding site" evidence="2">
    <location>
        <position position="84"/>
    </location>
    <ligand>
        <name>carbamoyl phosphate</name>
        <dbReference type="ChEBI" id="CHEBI:58228"/>
    </ligand>
</feature>
<feature type="binding site" evidence="2">
    <location>
        <position position="108"/>
    </location>
    <ligand>
        <name>carbamoyl phosphate</name>
        <dbReference type="ChEBI" id="CHEBI:58228"/>
    </ligand>
</feature>
<feature type="binding site" evidence="2">
    <location>
        <begin position="135"/>
        <end position="138"/>
    </location>
    <ligand>
        <name>carbamoyl phosphate</name>
        <dbReference type="ChEBI" id="CHEBI:58228"/>
    </ligand>
</feature>
<feature type="binding site" evidence="2">
    <location>
        <position position="168"/>
    </location>
    <ligand>
        <name>L-ornithine</name>
        <dbReference type="ChEBI" id="CHEBI:46911"/>
    </ligand>
</feature>
<feature type="binding site" evidence="2">
    <location>
        <position position="232"/>
    </location>
    <ligand>
        <name>L-ornithine</name>
        <dbReference type="ChEBI" id="CHEBI:46911"/>
    </ligand>
</feature>
<feature type="binding site" evidence="2">
    <location>
        <begin position="236"/>
        <end position="237"/>
    </location>
    <ligand>
        <name>L-ornithine</name>
        <dbReference type="ChEBI" id="CHEBI:46911"/>
    </ligand>
</feature>
<feature type="binding site" evidence="2">
    <location>
        <begin position="274"/>
        <end position="275"/>
    </location>
    <ligand>
        <name>carbamoyl phosphate</name>
        <dbReference type="ChEBI" id="CHEBI:58228"/>
    </ligand>
</feature>
<feature type="binding site" evidence="2">
    <location>
        <position position="321"/>
    </location>
    <ligand>
        <name>carbamoyl phosphate</name>
        <dbReference type="ChEBI" id="CHEBI:58228"/>
    </ligand>
</feature>
<gene>
    <name evidence="2" type="primary">arcB</name>
    <name type="ordered locus">CGSHiGG_06290</name>
</gene>
<evidence type="ECO:0000250" key="1"/>
<evidence type="ECO:0000255" key="2">
    <source>
        <dbReference type="HAMAP-Rule" id="MF_01109"/>
    </source>
</evidence>